<feature type="chain" id="PRO_1000022938" description="2-C-methyl-D-erythritol 4-phosphate cytidylyltransferase">
    <location>
        <begin position="1"/>
        <end position="234"/>
    </location>
</feature>
<feature type="site" description="Transition state stabilizer" evidence="1">
    <location>
        <position position="21"/>
    </location>
</feature>
<feature type="site" description="Transition state stabilizer" evidence="1">
    <location>
        <position position="28"/>
    </location>
</feature>
<feature type="site" description="Positions MEP for the nucleophilic attack" evidence="1">
    <location>
        <position position="162"/>
    </location>
</feature>
<feature type="site" description="Positions MEP for the nucleophilic attack" evidence="1">
    <location>
        <position position="218"/>
    </location>
</feature>
<evidence type="ECO:0000255" key="1">
    <source>
        <dbReference type="HAMAP-Rule" id="MF_00108"/>
    </source>
</evidence>
<proteinExistence type="inferred from homology"/>
<accession>A6V1F5</accession>
<sequence length="234" mass="25700">MTTSDLPAFWTVIPAAGVGSRMRADRPKQYLDLAGRTVIERTLDCFLEHPMLRGLVVCLAEDDPYWPGLDCAASRHVQRAAGGVERADSVLSGLLRLLELGARADDWVLVHDAARPNLTRGDLDRLLEELAEDPVGGLLAVPARDTLKRSDRDGRVSETIDRSVVWLAYTPQMFRLGALHRALADALVAGVAITDEASAMEWAGYAPKLVEGRADNLKITTPEDLLRLQRSFPH</sequence>
<protein>
    <recommendedName>
        <fullName evidence="1">2-C-methyl-D-erythritol 4-phosphate cytidylyltransferase</fullName>
        <ecNumber evidence="1">2.7.7.60</ecNumber>
    </recommendedName>
    <alternativeName>
        <fullName evidence="1">4-diphosphocytidyl-2C-methyl-D-erythritol synthase</fullName>
    </alternativeName>
    <alternativeName>
        <fullName evidence="1">MEP cytidylyltransferase</fullName>
        <shortName evidence="1">MCT</shortName>
    </alternativeName>
</protein>
<gene>
    <name evidence="1" type="primary">ispD</name>
    <name type="ordered locus">PSPA7_1506</name>
</gene>
<reference key="1">
    <citation type="submission" date="2007-06" db="EMBL/GenBank/DDBJ databases">
        <authorList>
            <person name="Dodson R.J."/>
            <person name="Harkins D."/>
            <person name="Paulsen I.T."/>
        </authorList>
    </citation>
    <scope>NUCLEOTIDE SEQUENCE [LARGE SCALE GENOMIC DNA]</scope>
    <source>
        <strain>DSM 24068 / PA7</strain>
    </source>
</reference>
<name>ISPD_PSEP7</name>
<dbReference type="EC" id="2.7.7.60" evidence="1"/>
<dbReference type="EMBL" id="CP000744">
    <property type="protein sequence ID" value="ABR84264.1"/>
    <property type="molecule type" value="Genomic_DNA"/>
</dbReference>
<dbReference type="RefSeq" id="WP_012074701.1">
    <property type="nucleotide sequence ID" value="NC_009656.1"/>
</dbReference>
<dbReference type="SMR" id="A6V1F5"/>
<dbReference type="KEGG" id="pap:PSPA7_1506"/>
<dbReference type="HOGENOM" id="CLU_061281_3_1_6"/>
<dbReference type="UniPathway" id="UPA00056">
    <property type="reaction ID" value="UER00093"/>
</dbReference>
<dbReference type="Proteomes" id="UP000001582">
    <property type="component" value="Chromosome"/>
</dbReference>
<dbReference type="GO" id="GO:0050518">
    <property type="term" value="F:2-C-methyl-D-erythritol 4-phosphate cytidylyltransferase activity"/>
    <property type="evidence" value="ECO:0007669"/>
    <property type="project" value="UniProtKB-UniRule"/>
</dbReference>
<dbReference type="GO" id="GO:0019288">
    <property type="term" value="P:isopentenyl diphosphate biosynthetic process, methylerythritol 4-phosphate pathway"/>
    <property type="evidence" value="ECO:0007669"/>
    <property type="project" value="UniProtKB-UniRule"/>
</dbReference>
<dbReference type="CDD" id="cd02516">
    <property type="entry name" value="CDP-ME_synthetase"/>
    <property type="match status" value="1"/>
</dbReference>
<dbReference type="FunFam" id="3.90.550.10:FF:000003">
    <property type="entry name" value="2-C-methyl-D-erythritol 4-phosphate cytidylyltransferase"/>
    <property type="match status" value="1"/>
</dbReference>
<dbReference type="Gene3D" id="3.90.550.10">
    <property type="entry name" value="Spore Coat Polysaccharide Biosynthesis Protein SpsA, Chain A"/>
    <property type="match status" value="1"/>
</dbReference>
<dbReference type="HAMAP" id="MF_00108">
    <property type="entry name" value="IspD"/>
    <property type="match status" value="1"/>
</dbReference>
<dbReference type="InterPro" id="IPR001228">
    <property type="entry name" value="IspD"/>
</dbReference>
<dbReference type="InterPro" id="IPR034683">
    <property type="entry name" value="IspD/TarI"/>
</dbReference>
<dbReference type="InterPro" id="IPR050088">
    <property type="entry name" value="IspD/TarI_cytidylyltransf_bact"/>
</dbReference>
<dbReference type="InterPro" id="IPR018294">
    <property type="entry name" value="ISPD_synthase_CS"/>
</dbReference>
<dbReference type="InterPro" id="IPR029044">
    <property type="entry name" value="Nucleotide-diphossugar_trans"/>
</dbReference>
<dbReference type="NCBIfam" id="TIGR00453">
    <property type="entry name" value="ispD"/>
    <property type="match status" value="1"/>
</dbReference>
<dbReference type="PANTHER" id="PTHR32125">
    <property type="entry name" value="2-C-METHYL-D-ERYTHRITOL 4-PHOSPHATE CYTIDYLYLTRANSFERASE, CHLOROPLASTIC"/>
    <property type="match status" value="1"/>
</dbReference>
<dbReference type="PANTHER" id="PTHR32125:SF4">
    <property type="entry name" value="2-C-METHYL-D-ERYTHRITOL 4-PHOSPHATE CYTIDYLYLTRANSFERASE, CHLOROPLASTIC"/>
    <property type="match status" value="1"/>
</dbReference>
<dbReference type="Pfam" id="PF01128">
    <property type="entry name" value="IspD"/>
    <property type="match status" value="1"/>
</dbReference>
<dbReference type="SUPFAM" id="SSF53448">
    <property type="entry name" value="Nucleotide-diphospho-sugar transferases"/>
    <property type="match status" value="1"/>
</dbReference>
<dbReference type="PROSITE" id="PS01295">
    <property type="entry name" value="ISPD"/>
    <property type="match status" value="1"/>
</dbReference>
<comment type="function">
    <text evidence="1">Catalyzes the formation of 4-diphosphocytidyl-2-C-methyl-D-erythritol from CTP and 2-C-methyl-D-erythritol 4-phosphate (MEP).</text>
</comment>
<comment type="catalytic activity">
    <reaction evidence="1">
        <text>2-C-methyl-D-erythritol 4-phosphate + CTP + H(+) = 4-CDP-2-C-methyl-D-erythritol + diphosphate</text>
        <dbReference type="Rhea" id="RHEA:13429"/>
        <dbReference type="ChEBI" id="CHEBI:15378"/>
        <dbReference type="ChEBI" id="CHEBI:33019"/>
        <dbReference type="ChEBI" id="CHEBI:37563"/>
        <dbReference type="ChEBI" id="CHEBI:57823"/>
        <dbReference type="ChEBI" id="CHEBI:58262"/>
        <dbReference type="EC" id="2.7.7.60"/>
    </reaction>
</comment>
<comment type="pathway">
    <text evidence="1">Isoprenoid biosynthesis; isopentenyl diphosphate biosynthesis via DXP pathway; isopentenyl diphosphate from 1-deoxy-D-xylulose 5-phosphate: step 2/6.</text>
</comment>
<comment type="similarity">
    <text evidence="1">Belongs to the IspD/TarI cytidylyltransferase family. IspD subfamily.</text>
</comment>
<organism>
    <name type="scientific">Pseudomonas paraeruginosa (strain DSM 24068 / PA7)</name>
    <name type="common">Pseudomonas aeruginosa (strain PA7)</name>
    <dbReference type="NCBI Taxonomy" id="381754"/>
    <lineage>
        <taxon>Bacteria</taxon>
        <taxon>Pseudomonadati</taxon>
        <taxon>Pseudomonadota</taxon>
        <taxon>Gammaproteobacteria</taxon>
        <taxon>Pseudomonadales</taxon>
        <taxon>Pseudomonadaceae</taxon>
        <taxon>Pseudomonas</taxon>
        <taxon>Pseudomonas paraeruginosa</taxon>
    </lineage>
</organism>
<keyword id="KW-0414">Isoprene biosynthesis</keyword>
<keyword id="KW-0548">Nucleotidyltransferase</keyword>
<keyword id="KW-0808">Transferase</keyword>